<protein>
    <recommendedName>
        <fullName evidence="1">ATP-dependent zinc metalloprotease FtsH</fullName>
        <ecNumber evidence="1">3.4.24.-</ecNumber>
    </recommendedName>
</protein>
<evidence type="ECO:0000255" key="1">
    <source>
        <dbReference type="HAMAP-Rule" id="MF_01458"/>
    </source>
</evidence>
<evidence type="ECO:0000256" key="2">
    <source>
        <dbReference type="SAM" id="MobiDB-lite"/>
    </source>
</evidence>
<comment type="function">
    <text evidence="1">Acts as a processive, ATP-dependent zinc metallopeptidase for both cytoplasmic and membrane proteins. Plays a role in the quality control of integral membrane proteins.</text>
</comment>
<comment type="cofactor">
    <cofactor evidence="1">
        <name>Zn(2+)</name>
        <dbReference type="ChEBI" id="CHEBI:29105"/>
    </cofactor>
    <text evidence="1">Binds 1 zinc ion per subunit.</text>
</comment>
<comment type="subunit">
    <text evidence="1">Homohexamer.</text>
</comment>
<comment type="subcellular location">
    <subcellularLocation>
        <location evidence="1">Cell membrane</location>
        <topology evidence="1">Multi-pass membrane protein</topology>
        <orientation evidence="1">Cytoplasmic side</orientation>
    </subcellularLocation>
</comment>
<comment type="similarity">
    <text evidence="1">In the central section; belongs to the AAA ATPase family.</text>
</comment>
<comment type="similarity">
    <text evidence="1">In the C-terminal section; belongs to the peptidase M41 family.</text>
</comment>
<reference key="1">
    <citation type="journal article" date="2006" name="Genome Res.">
        <title>Skewed genomic variability in strains of the toxigenic bacterial pathogen, Clostridium perfringens.</title>
        <authorList>
            <person name="Myers G.S.A."/>
            <person name="Rasko D.A."/>
            <person name="Cheung J.K."/>
            <person name="Ravel J."/>
            <person name="Seshadri R."/>
            <person name="DeBoy R.T."/>
            <person name="Ren Q."/>
            <person name="Varga J."/>
            <person name="Awad M.M."/>
            <person name="Brinkac L.M."/>
            <person name="Daugherty S.C."/>
            <person name="Haft D.H."/>
            <person name="Dodson R.J."/>
            <person name="Madupu R."/>
            <person name="Nelson W.C."/>
            <person name="Rosovitz M.J."/>
            <person name="Sullivan S.A."/>
            <person name="Khouri H."/>
            <person name="Dimitrov G.I."/>
            <person name="Watkins K.L."/>
            <person name="Mulligan S."/>
            <person name="Benton J."/>
            <person name="Radune D."/>
            <person name="Fisher D.J."/>
            <person name="Atkins H.S."/>
            <person name="Hiscox T."/>
            <person name="Jost B.H."/>
            <person name="Billington S.J."/>
            <person name="Songer J.G."/>
            <person name="McClane B.A."/>
            <person name="Titball R.W."/>
            <person name="Rood J.I."/>
            <person name="Melville S.B."/>
            <person name="Paulsen I.T."/>
        </authorList>
    </citation>
    <scope>NUCLEOTIDE SEQUENCE [LARGE SCALE GENOMIC DNA]</scope>
    <source>
        <strain>ATCC 13124 / DSM 756 / JCM 1290 / NCIMB 6125 / NCTC 8237 / S 107 / Type A</strain>
    </source>
</reference>
<proteinExistence type="inferred from homology"/>
<keyword id="KW-0067">ATP-binding</keyword>
<keyword id="KW-1003">Cell membrane</keyword>
<keyword id="KW-0378">Hydrolase</keyword>
<keyword id="KW-0472">Membrane</keyword>
<keyword id="KW-0479">Metal-binding</keyword>
<keyword id="KW-0482">Metalloprotease</keyword>
<keyword id="KW-0547">Nucleotide-binding</keyword>
<keyword id="KW-0645">Protease</keyword>
<keyword id="KW-0812">Transmembrane</keyword>
<keyword id="KW-1133">Transmembrane helix</keyword>
<keyword id="KW-0862">Zinc</keyword>
<accession>Q0TTK8</accession>
<organism>
    <name type="scientific">Clostridium perfringens (strain ATCC 13124 / DSM 756 / JCM 1290 / NCIMB 6125 / NCTC 8237 / Type A)</name>
    <dbReference type="NCBI Taxonomy" id="195103"/>
    <lineage>
        <taxon>Bacteria</taxon>
        <taxon>Bacillati</taxon>
        <taxon>Bacillota</taxon>
        <taxon>Clostridia</taxon>
        <taxon>Eubacteriales</taxon>
        <taxon>Clostridiaceae</taxon>
        <taxon>Clostridium</taxon>
    </lineage>
</organism>
<name>FTSH_CLOP1</name>
<dbReference type="EC" id="3.4.24.-" evidence="1"/>
<dbReference type="EMBL" id="CP000246">
    <property type="protein sequence ID" value="ABG83666.1"/>
    <property type="molecule type" value="Genomic_DNA"/>
</dbReference>
<dbReference type="RefSeq" id="WP_011590264.1">
    <property type="nucleotide sequence ID" value="NC_008261.1"/>
</dbReference>
<dbReference type="SMR" id="Q0TTK8"/>
<dbReference type="STRING" id="195103.CPF_0579"/>
<dbReference type="PaxDb" id="195103-CPF_0579"/>
<dbReference type="GeneID" id="93003077"/>
<dbReference type="KEGG" id="cpf:CPF_0579"/>
<dbReference type="eggNOG" id="COG0465">
    <property type="taxonomic scope" value="Bacteria"/>
</dbReference>
<dbReference type="HOGENOM" id="CLU_000688_16_1_9"/>
<dbReference type="Proteomes" id="UP000001823">
    <property type="component" value="Chromosome"/>
</dbReference>
<dbReference type="GO" id="GO:0005886">
    <property type="term" value="C:plasma membrane"/>
    <property type="evidence" value="ECO:0007669"/>
    <property type="project" value="UniProtKB-SubCell"/>
</dbReference>
<dbReference type="GO" id="GO:0005524">
    <property type="term" value="F:ATP binding"/>
    <property type="evidence" value="ECO:0007669"/>
    <property type="project" value="UniProtKB-UniRule"/>
</dbReference>
<dbReference type="GO" id="GO:0016887">
    <property type="term" value="F:ATP hydrolysis activity"/>
    <property type="evidence" value="ECO:0007669"/>
    <property type="project" value="UniProtKB-UniRule"/>
</dbReference>
<dbReference type="GO" id="GO:0004176">
    <property type="term" value="F:ATP-dependent peptidase activity"/>
    <property type="evidence" value="ECO:0007669"/>
    <property type="project" value="InterPro"/>
</dbReference>
<dbReference type="GO" id="GO:0004222">
    <property type="term" value="F:metalloendopeptidase activity"/>
    <property type="evidence" value="ECO:0007669"/>
    <property type="project" value="InterPro"/>
</dbReference>
<dbReference type="GO" id="GO:0008270">
    <property type="term" value="F:zinc ion binding"/>
    <property type="evidence" value="ECO:0007669"/>
    <property type="project" value="UniProtKB-UniRule"/>
</dbReference>
<dbReference type="GO" id="GO:0030163">
    <property type="term" value="P:protein catabolic process"/>
    <property type="evidence" value="ECO:0007669"/>
    <property type="project" value="UniProtKB-UniRule"/>
</dbReference>
<dbReference type="GO" id="GO:0006508">
    <property type="term" value="P:proteolysis"/>
    <property type="evidence" value="ECO:0007669"/>
    <property type="project" value="UniProtKB-KW"/>
</dbReference>
<dbReference type="CDD" id="cd19501">
    <property type="entry name" value="RecA-like_FtsH"/>
    <property type="match status" value="1"/>
</dbReference>
<dbReference type="FunFam" id="1.10.8.60:FF:000083">
    <property type="entry name" value="ATP-dependent zinc metalloprotease FtsH"/>
    <property type="match status" value="1"/>
</dbReference>
<dbReference type="FunFam" id="1.20.58.760:FF:000001">
    <property type="entry name" value="ATP-dependent zinc metalloprotease FtsH"/>
    <property type="match status" value="1"/>
</dbReference>
<dbReference type="FunFam" id="3.40.50.300:FF:000001">
    <property type="entry name" value="ATP-dependent zinc metalloprotease FtsH"/>
    <property type="match status" value="1"/>
</dbReference>
<dbReference type="Gene3D" id="1.10.8.60">
    <property type="match status" value="1"/>
</dbReference>
<dbReference type="Gene3D" id="3.30.720.210">
    <property type="match status" value="1"/>
</dbReference>
<dbReference type="Gene3D" id="3.40.50.300">
    <property type="entry name" value="P-loop containing nucleotide triphosphate hydrolases"/>
    <property type="match status" value="1"/>
</dbReference>
<dbReference type="Gene3D" id="1.20.58.760">
    <property type="entry name" value="Peptidase M41"/>
    <property type="match status" value="1"/>
</dbReference>
<dbReference type="HAMAP" id="MF_01458">
    <property type="entry name" value="FtsH"/>
    <property type="match status" value="1"/>
</dbReference>
<dbReference type="InterPro" id="IPR003593">
    <property type="entry name" value="AAA+_ATPase"/>
</dbReference>
<dbReference type="InterPro" id="IPR041569">
    <property type="entry name" value="AAA_lid_3"/>
</dbReference>
<dbReference type="InterPro" id="IPR003959">
    <property type="entry name" value="ATPase_AAA_core"/>
</dbReference>
<dbReference type="InterPro" id="IPR003960">
    <property type="entry name" value="ATPase_AAA_CS"/>
</dbReference>
<dbReference type="InterPro" id="IPR005936">
    <property type="entry name" value="FtsH"/>
</dbReference>
<dbReference type="InterPro" id="IPR027417">
    <property type="entry name" value="P-loop_NTPase"/>
</dbReference>
<dbReference type="InterPro" id="IPR011546">
    <property type="entry name" value="Pept_M41_FtsH_extracell"/>
</dbReference>
<dbReference type="InterPro" id="IPR000642">
    <property type="entry name" value="Peptidase_M41"/>
</dbReference>
<dbReference type="InterPro" id="IPR037219">
    <property type="entry name" value="Peptidase_M41-like"/>
</dbReference>
<dbReference type="NCBIfam" id="TIGR01241">
    <property type="entry name" value="FtsH_fam"/>
    <property type="match status" value="1"/>
</dbReference>
<dbReference type="PANTHER" id="PTHR23076:SF97">
    <property type="entry name" value="ATP-DEPENDENT ZINC METALLOPROTEASE YME1L1"/>
    <property type="match status" value="1"/>
</dbReference>
<dbReference type="PANTHER" id="PTHR23076">
    <property type="entry name" value="METALLOPROTEASE M41 FTSH"/>
    <property type="match status" value="1"/>
</dbReference>
<dbReference type="Pfam" id="PF00004">
    <property type="entry name" value="AAA"/>
    <property type="match status" value="1"/>
</dbReference>
<dbReference type="Pfam" id="PF17862">
    <property type="entry name" value="AAA_lid_3"/>
    <property type="match status" value="1"/>
</dbReference>
<dbReference type="Pfam" id="PF06480">
    <property type="entry name" value="FtsH_ext"/>
    <property type="match status" value="1"/>
</dbReference>
<dbReference type="Pfam" id="PF01434">
    <property type="entry name" value="Peptidase_M41"/>
    <property type="match status" value="1"/>
</dbReference>
<dbReference type="SMART" id="SM00382">
    <property type="entry name" value="AAA"/>
    <property type="match status" value="1"/>
</dbReference>
<dbReference type="SUPFAM" id="SSF140990">
    <property type="entry name" value="FtsH protease domain-like"/>
    <property type="match status" value="1"/>
</dbReference>
<dbReference type="SUPFAM" id="SSF52540">
    <property type="entry name" value="P-loop containing nucleoside triphosphate hydrolases"/>
    <property type="match status" value="1"/>
</dbReference>
<dbReference type="PROSITE" id="PS00674">
    <property type="entry name" value="AAA"/>
    <property type="match status" value="1"/>
</dbReference>
<sequence length="717" mass="79891">MFKDKKMLKYIVIYSIIAFGILLTFNMVKDEMLYEKVDYSTFMQMLDKKEVKSVNFSGNQIEITPSDSSNLKGKILYTTNPAVAGITQPELIKDLTVAGVEFNVTKPENYQLLGLLMSWVFPLILIFFVGRMMFSKMNNKMGGGVMSFGKNNAKLYAENETGITFKDVAGQDEAKESLVEIVDFLHDTRKYVEIGAKLPKGALLVGPPGTGKTLLAKAVAGEAKVPFFSMSGSDFVEMFVGMGAARVRDLFKQAEEKAPCIVFIDEIDAIGKSRDGAIQGNDEREQTLNQLLTEMDGFDSSKGVVILAATNRPEVLDKALLRPGRFDRRIIVDRPDLIGREEILKVHSRDVKLSDDVSLEEIAKSTPGAVGADLANIVNEAALRAVKHGRKFVIQEDLDEAVEVIIAGQEKRDRILSPKEKKIVAYHEVGHALVAALLNNTDPVHKITIVPRTMGALGYTMQLPEEEKYLVSKEEMIDQISVMLGGRAAEEVVFNSITTGASNDIERATQSARNMITIYGMSERFDMMALEAMSNRYLDGRPVRNCSETTAAIADEEVLQVIKKAHEKSIKILIENRELLDEITGVLLDKETIMGDEFMEIVYGKYPEKREADEKAKKEIQSLREQALAKRKEKEEAIKKAREEALRLEEEQRKQDELKAMIEAQEEAAKLARANNEANNDALDSSKENEEVKSNVNDGATEEKKDDSSTNNKVDGE</sequence>
<feature type="chain" id="PRO_0000400337" description="ATP-dependent zinc metalloprotease FtsH">
    <location>
        <begin position="1"/>
        <end position="717"/>
    </location>
</feature>
<feature type="topological domain" description="Cytoplasmic" evidence="1">
    <location>
        <begin position="1"/>
        <end position="7"/>
    </location>
</feature>
<feature type="transmembrane region" description="Helical" evidence="1">
    <location>
        <begin position="8"/>
        <end position="28"/>
    </location>
</feature>
<feature type="topological domain" description="Extracellular" evidence="1">
    <location>
        <begin position="29"/>
        <end position="109"/>
    </location>
</feature>
<feature type="transmembrane region" description="Helical" evidence="1">
    <location>
        <begin position="110"/>
        <end position="130"/>
    </location>
</feature>
<feature type="topological domain" description="Cytoplasmic" evidence="1">
    <location>
        <begin position="131"/>
        <end position="717"/>
    </location>
</feature>
<feature type="region of interest" description="Disordered" evidence="2">
    <location>
        <begin position="670"/>
        <end position="717"/>
    </location>
</feature>
<feature type="compositionally biased region" description="Basic and acidic residues" evidence="2">
    <location>
        <begin position="684"/>
        <end position="693"/>
    </location>
</feature>
<feature type="compositionally biased region" description="Basic and acidic residues" evidence="2">
    <location>
        <begin position="701"/>
        <end position="717"/>
    </location>
</feature>
<feature type="active site" evidence="1">
    <location>
        <position position="428"/>
    </location>
</feature>
<feature type="binding site" evidence="1">
    <location>
        <begin position="206"/>
        <end position="213"/>
    </location>
    <ligand>
        <name>ATP</name>
        <dbReference type="ChEBI" id="CHEBI:30616"/>
    </ligand>
</feature>
<feature type="binding site" evidence="1">
    <location>
        <position position="427"/>
    </location>
    <ligand>
        <name>Zn(2+)</name>
        <dbReference type="ChEBI" id="CHEBI:29105"/>
        <note>catalytic</note>
    </ligand>
</feature>
<feature type="binding site" evidence="1">
    <location>
        <position position="431"/>
    </location>
    <ligand>
        <name>Zn(2+)</name>
        <dbReference type="ChEBI" id="CHEBI:29105"/>
        <note>catalytic</note>
    </ligand>
</feature>
<feature type="binding site" evidence="1">
    <location>
        <position position="504"/>
    </location>
    <ligand>
        <name>Zn(2+)</name>
        <dbReference type="ChEBI" id="CHEBI:29105"/>
        <note>catalytic</note>
    </ligand>
</feature>
<gene>
    <name evidence="1" type="primary">ftsH</name>
    <name type="ordered locus">CPF_0579</name>
</gene>